<dbReference type="EMBL" id="BC083018">
    <property type="protein sequence ID" value="AAH83018.1"/>
    <property type="molecule type" value="mRNA"/>
</dbReference>
<dbReference type="RefSeq" id="NP_001088139.1">
    <property type="nucleotide sequence ID" value="NM_001094670.2"/>
</dbReference>
<dbReference type="RefSeq" id="XP_018100708.1">
    <property type="nucleotide sequence ID" value="XM_018245219.1"/>
</dbReference>
<dbReference type="RefSeq" id="XP_018100709.1">
    <property type="nucleotide sequence ID" value="XM_018245220.1"/>
</dbReference>
<dbReference type="RefSeq" id="XP_018100710.1">
    <property type="nucleotide sequence ID" value="XM_018245221.1"/>
</dbReference>
<dbReference type="GeneID" id="494845"/>
<dbReference type="KEGG" id="xla:494845"/>
<dbReference type="AGR" id="Xenbase:XB-GENE-6255068"/>
<dbReference type="CTD" id="494845"/>
<dbReference type="Xenbase" id="XB-GENE-6255068">
    <property type="gene designation" value="timmdc1.L"/>
</dbReference>
<dbReference type="OMA" id="SYMNFME"/>
<dbReference type="OrthoDB" id="5826189at2759"/>
<dbReference type="Proteomes" id="UP000186698">
    <property type="component" value="Chromosome 2L"/>
</dbReference>
<dbReference type="Bgee" id="494845">
    <property type="expression patterns" value="Expressed in testis and 19 other cell types or tissues"/>
</dbReference>
<dbReference type="GO" id="GO:0031966">
    <property type="term" value="C:mitochondrial membrane"/>
    <property type="evidence" value="ECO:0007669"/>
    <property type="project" value="UniProtKB-SubCell"/>
</dbReference>
<dbReference type="GO" id="GO:0005739">
    <property type="term" value="C:mitochondrion"/>
    <property type="evidence" value="ECO:0000318"/>
    <property type="project" value="GO_Central"/>
</dbReference>
<dbReference type="GO" id="GO:0032981">
    <property type="term" value="P:mitochondrial respiratory chain complex I assembly"/>
    <property type="evidence" value="ECO:0007669"/>
    <property type="project" value="InterPro"/>
</dbReference>
<dbReference type="InterPro" id="IPR055299">
    <property type="entry name" value="TIMMDC1"/>
</dbReference>
<dbReference type="PANTHER" id="PTHR13002">
    <property type="entry name" value="C3ORF1 PROTEIN-RELATED"/>
    <property type="match status" value="1"/>
</dbReference>
<dbReference type="PANTHER" id="PTHR13002:SF1">
    <property type="entry name" value="COMPLEX I ASSEMBLY FACTOR TIMMDC1, MITOCHONDRIAL"/>
    <property type="match status" value="1"/>
</dbReference>
<dbReference type="Pfam" id="PF02466">
    <property type="entry name" value="Tim17"/>
    <property type="match status" value="1"/>
</dbReference>
<evidence type="ECO:0000250" key="1"/>
<evidence type="ECO:0000255" key="2"/>
<evidence type="ECO:0000256" key="3">
    <source>
        <dbReference type="SAM" id="MobiDB-lite"/>
    </source>
</evidence>
<evidence type="ECO:0000305" key="4"/>
<gene>
    <name type="primary">timmdc1</name>
</gene>
<proteinExistence type="evidence at transcript level"/>
<comment type="function">
    <text evidence="1">Chaperone protein involved in the assembly of the mitochondrial NADH:ubiquinone oxidoreductase complex (complex I). Participates in constructing the membrane arm of complex I (By similarity).</text>
</comment>
<comment type="subunit">
    <text evidence="1">Associates with the intermediate 315 kDa subcomplex of incompletely assembled complex I.</text>
</comment>
<comment type="subcellular location">
    <subcellularLocation>
        <location evidence="1">Mitochondrion membrane</location>
        <topology evidence="1">Multi-pass membrane protein</topology>
    </subcellularLocation>
</comment>
<comment type="similarity">
    <text evidence="4">Belongs to the Tim17/Tim22/Tim23 family.</text>
</comment>
<keyword id="KW-0143">Chaperone</keyword>
<keyword id="KW-0472">Membrane</keyword>
<keyword id="KW-0496">Mitochondrion</keyword>
<keyword id="KW-1185">Reference proteome</keyword>
<keyword id="KW-0812">Transmembrane</keyword>
<keyword id="KW-1133">Transmembrane helix</keyword>
<feature type="chain" id="PRO_0000252481" description="Complex I assembly factor TIMMDC1, mitochondrial">
    <location>
        <begin position="1"/>
        <end position="256"/>
    </location>
</feature>
<feature type="transmembrane region" description="Helical" evidence="2">
    <location>
        <begin position="111"/>
        <end position="131"/>
    </location>
</feature>
<feature type="transmembrane region" description="Helical" evidence="2">
    <location>
        <begin position="159"/>
        <end position="179"/>
    </location>
</feature>
<feature type="region of interest" description="Disordered" evidence="3">
    <location>
        <begin position="1"/>
        <end position="27"/>
    </location>
</feature>
<protein>
    <recommendedName>
        <fullName>Complex I assembly factor TIMMDC1, mitochondrial</fullName>
    </recommendedName>
    <alternativeName>
        <fullName>Translocase of inner mitochondrial membrane domain-containing protein 1</fullName>
        <shortName>TIMM domain containing-protein 1</shortName>
    </alternativeName>
</protein>
<organism>
    <name type="scientific">Xenopus laevis</name>
    <name type="common">African clawed frog</name>
    <dbReference type="NCBI Taxonomy" id="8355"/>
    <lineage>
        <taxon>Eukaryota</taxon>
        <taxon>Metazoa</taxon>
        <taxon>Chordata</taxon>
        <taxon>Craniata</taxon>
        <taxon>Vertebrata</taxon>
        <taxon>Euteleostomi</taxon>
        <taxon>Amphibia</taxon>
        <taxon>Batrachia</taxon>
        <taxon>Anura</taxon>
        <taxon>Pipoidea</taxon>
        <taxon>Pipidae</taxon>
        <taxon>Xenopodinae</taxon>
        <taxon>Xenopus</taxon>
        <taxon>Xenopus</taxon>
    </lineage>
</organism>
<name>TIDC1_XENLA</name>
<sequence>MAQSDPPKSPDPPLPTSIRNPQTPESGWDRIRELFQPNEQGHYPEEVGSIVKSAVTGALLGGIYGGLPAARHSKERYIQQSQAQIYQHRVEAVRSAHNAALRGFIRYGWRWGWRVAAFVTIFNSVSTGLTVYRDKLALSHYAAAGAVTGGLFRLNLGLVGLLSGSLIGAALGVPAGALISGLQSISGESIREKKRRERQELYENKVQEWSARLQVTDEVLEEMETSQQDPLEQQVEKIQELLQLPRNPAVSPKEGR</sequence>
<accession>Q5XK94</accession>
<reference key="1">
    <citation type="submission" date="2004-09" db="EMBL/GenBank/DDBJ databases">
        <authorList>
            <consortium name="NIH - Xenopus Gene Collection (XGC) project"/>
        </authorList>
    </citation>
    <scope>NUCLEOTIDE SEQUENCE [LARGE SCALE MRNA]</scope>
    <source>
        <tissue>Spleen</tissue>
    </source>
</reference>